<organismHost>
    <name type="scientific">Crataegus</name>
    <name type="common">hawthorn</name>
    <dbReference type="NCBI Taxonomy" id="23159"/>
</organismHost>
<organismHost>
    <name type="scientific">Cydonia oblonga</name>
    <name type="common">Quince</name>
    <name type="synonym">Pyrus cydonia</name>
    <dbReference type="NCBI Taxonomy" id="36610"/>
</organismHost>
<organismHost>
    <name type="scientific">Malus sylvestris</name>
    <name type="common">European crab apple</name>
    <dbReference type="NCBI Taxonomy" id="3752"/>
</organismHost>
<organismHost>
    <name type="scientific">Prunus armeniaca</name>
    <name type="common">Apricot</name>
    <name type="synonym">Armeniaca vulgaris</name>
    <dbReference type="NCBI Taxonomy" id="36596"/>
</organismHost>
<organismHost>
    <name type="scientific">Prunus domestica</name>
    <name type="common">Garden plum</name>
    <dbReference type="NCBI Taxonomy" id="3758"/>
</organismHost>
<organismHost>
    <name type="scientific">Prunus persica</name>
    <name type="common">Peach</name>
    <name type="synonym">Amygdalus persica</name>
    <dbReference type="NCBI Taxonomy" id="3760"/>
</organismHost>
<organismHost>
    <name type="scientific">Prunus spinosa</name>
    <name type="common">Blackthorn</name>
    <name type="synonym">Prunus domestica var. spinosa</name>
    <dbReference type="NCBI Taxonomy" id="114937"/>
</organismHost>
<organismHost>
    <name type="scientific">Pyrus communis</name>
    <name type="common">Pear</name>
    <name type="synonym">Pyrus domestica</name>
    <dbReference type="NCBI Taxonomy" id="23211"/>
</organismHost>
<reference key="1">
    <citation type="journal article" date="1993" name="J. Gen. Virol.">
        <title>Complete nucleotide sequence of the genome of an apple isolate of apple chlorotic leaf spot virus.</title>
        <authorList>
            <person name="Sato K."/>
            <person name="Yoshikawa N."/>
            <person name="Takahashi T."/>
        </authorList>
    </citation>
    <scope>NUCLEOTIDE SEQUENCE [GENOMIC RNA]</scope>
</reference>
<protein>
    <recommendedName>
        <fullName>RNA-directed RNA polymerase</fullName>
        <ecNumber>2.7.7.48</ecNumber>
    </recommendedName>
    <alternativeName>
        <fullName>216.5 kDa protein</fullName>
    </alternativeName>
    <alternativeName>
        <fullName>ORF1 protein</fullName>
    </alternativeName>
    <alternativeName>
        <fullName>RNA replicase</fullName>
    </alternativeName>
</protein>
<evidence type="ECO:0000255" key="1"/>
<evidence type="ECO:0000255" key="2">
    <source>
        <dbReference type="PROSITE-ProRule" id="PRU00539"/>
    </source>
</evidence>
<evidence type="ECO:0000255" key="3">
    <source>
        <dbReference type="PROSITE-ProRule" id="PRU00805"/>
    </source>
</evidence>
<evidence type="ECO:0000255" key="4">
    <source>
        <dbReference type="PROSITE-ProRule" id="PRU01079"/>
    </source>
</evidence>
<evidence type="ECO:0000256" key="5">
    <source>
        <dbReference type="SAM" id="MobiDB-lite"/>
    </source>
</evidence>
<evidence type="ECO:0000305" key="6"/>
<dbReference type="EC" id="2.7.7.48"/>
<dbReference type="EMBL" id="D14996">
    <property type="protein sequence ID" value="BAA03641.1"/>
    <property type="molecule type" value="Genomic_RNA"/>
</dbReference>
<dbReference type="PIR" id="JQ2183">
    <property type="entry name" value="JQ2183"/>
</dbReference>
<dbReference type="Proteomes" id="UP000000397">
    <property type="component" value="Genome"/>
</dbReference>
<dbReference type="GO" id="GO:0005524">
    <property type="term" value="F:ATP binding"/>
    <property type="evidence" value="ECO:0007669"/>
    <property type="project" value="UniProtKB-KW"/>
</dbReference>
<dbReference type="GO" id="GO:0004386">
    <property type="term" value="F:helicase activity"/>
    <property type="evidence" value="ECO:0007669"/>
    <property type="project" value="UniProtKB-KW"/>
</dbReference>
<dbReference type="GO" id="GO:0016787">
    <property type="term" value="F:hydrolase activity"/>
    <property type="evidence" value="ECO:0007669"/>
    <property type="project" value="UniProtKB-KW"/>
</dbReference>
<dbReference type="GO" id="GO:0008174">
    <property type="term" value="F:mRNA methyltransferase activity"/>
    <property type="evidence" value="ECO:0007669"/>
    <property type="project" value="InterPro"/>
</dbReference>
<dbReference type="GO" id="GO:0003723">
    <property type="term" value="F:RNA binding"/>
    <property type="evidence" value="ECO:0007669"/>
    <property type="project" value="InterPro"/>
</dbReference>
<dbReference type="GO" id="GO:0003968">
    <property type="term" value="F:RNA-directed RNA polymerase activity"/>
    <property type="evidence" value="ECO:0007669"/>
    <property type="project" value="UniProtKB-KW"/>
</dbReference>
<dbReference type="GO" id="GO:0006351">
    <property type="term" value="P:DNA-templated transcription"/>
    <property type="evidence" value="ECO:0007669"/>
    <property type="project" value="InterPro"/>
</dbReference>
<dbReference type="GO" id="GO:0016556">
    <property type="term" value="P:mRNA modification"/>
    <property type="evidence" value="ECO:0007669"/>
    <property type="project" value="InterPro"/>
</dbReference>
<dbReference type="GO" id="GO:0006396">
    <property type="term" value="P:RNA processing"/>
    <property type="evidence" value="ECO:0007669"/>
    <property type="project" value="InterPro"/>
</dbReference>
<dbReference type="GO" id="GO:0039694">
    <property type="term" value="P:viral RNA genome replication"/>
    <property type="evidence" value="ECO:0007669"/>
    <property type="project" value="InterPro"/>
</dbReference>
<dbReference type="CDD" id="cd23245">
    <property type="entry name" value="Betaflexiviridae_RdRp"/>
    <property type="match status" value="1"/>
</dbReference>
<dbReference type="Gene3D" id="2.60.120.590">
    <property type="entry name" value="Alpha-ketoglutarate-dependent dioxygenase AlkB-like"/>
    <property type="match status" value="1"/>
</dbReference>
<dbReference type="Gene3D" id="3.40.50.300">
    <property type="entry name" value="P-loop containing nucleotide triphosphate hydrolases"/>
    <property type="match status" value="1"/>
</dbReference>
<dbReference type="InterPro" id="IPR027351">
    <property type="entry name" value="(+)RNA_virus_helicase_core_dom"/>
</dbReference>
<dbReference type="InterPro" id="IPR037151">
    <property type="entry name" value="AlkB-like_sf"/>
</dbReference>
<dbReference type="InterPro" id="IPR002588">
    <property type="entry name" value="Alphavirus-like_MT_dom"/>
</dbReference>
<dbReference type="InterPro" id="IPR043502">
    <property type="entry name" value="DNA/RNA_pol_sf"/>
</dbReference>
<dbReference type="InterPro" id="IPR044861">
    <property type="entry name" value="IPNS-like_FE2OG_OXY"/>
</dbReference>
<dbReference type="InterPro" id="IPR005123">
    <property type="entry name" value="Oxoglu/Fe-dep_dioxygenase_dom"/>
</dbReference>
<dbReference type="InterPro" id="IPR027417">
    <property type="entry name" value="P-loop_NTPase"/>
</dbReference>
<dbReference type="InterPro" id="IPR001788">
    <property type="entry name" value="RNA-dep_RNA_pol_alsuvir"/>
</dbReference>
<dbReference type="InterPro" id="IPR008744">
    <property type="entry name" value="RNA-dir_pol_ACLSV"/>
</dbReference>
<dbReference type="InterPro" id="IPR007094">
    <property type="entry name" value="RNA-dir_pol_PSvirus"/>
</dbReference>
<dbReference type="Pfam" id="PF03171">
    <property type="entry name" value="2OG-FeII_Oxy"/>
    <property type="match status" value="1"/>
</dbReference>
<dbReference type="Pfam" id="PF05413">
    <property type="entry name" value="Peptidase_C34"/>
    <property type="match status" value="1"/>
</dbReference>
<dbReference type="Pfam" id="PF00978">
    <property type="entry name" value="RdRP_2"/>
    <property type="match status" value="1"/>
</dbReference>
<dbReference type="Pfam" id="PF01443">
    <property type="entry name" value="Viral_helicase1"/>
    <property type="match status" value="1"/>
</dbReference>
<dbReference type="Pfam" id="PF01660">
    <property type="entry name" value="Vmethyltransf"/>
    <property type="match status" value="1"/>
</dbReference>
<dbReference type="SUPFAM" id="SSF51197">
    <property type="entry name" value="Clavaminate synthase-like"/>
    <property type="match status" value="1"/>
</dbReference>
<dbReference type="SUPFAM" id="SSF56672">
    <property type="entry name" value="DNA/RNA polymerases"/>
    <property type="match status" value="1"/>
</dbReference>
<dbReference type="SUPFAM" id="SSF52540">
    <property type="entry name" value="P-loop containing nucleoside triphosphate hydrolases"/>
    <property type="match status" value="1"/>
</dbReference>
<dbReference type="PROSITE" id="PS51743">
    <property type="entry name" value="ALPHAVIRUS_MT"/>
    <property type="match status" value="1"/>
</dbReference>
<dbReference type="PROSITE" id="PS51471">
    <property type="entry name" value="FE2OG_OXY"/>
    <property type="match status" value="1"/>
</dbReference>
<dbReference type="PROSITE" id="PS51657">
    <property type="entry name" value="PSRV_HELICASE"/>
    <property type="match status" value="1"/>
</dbReference>
<dbReference type="PROSITE" id="PS50507">
    <property type="entry name" value="RDRP_SSRNA_POS"/>
    <property type="match status" value="1"/>
</dbReference>
<feature type="chain" id="PRO_0000222541" description="RNA-directed RNA polymerase">
    <location>
        <begin position="1"/>
        <end position="1885"/>
    </location>
</feature>
<feature type="domain" description="Alphavirus-like MT" evidence="4">
    <location>
        <begin position="63"/>
        <end position="239"/>
    </location>
</feature>
<feature type="domain" description="Fe2OG dioxygenase" evidence="3">
    <location>
        <begin position="748"/>
        <end position="836"/>
    </location>
</feature>
<feature type="domain" description="(+)RNA virus helicase ATP-binding">
    <location>
        <begin position="1027"/>
        <end position="1192"/>
    </location>
</feature>
<feature type="domain" description="(+)RNA virus helicase C-terminal">
    <location>
        <begin position="1193"/>
        <end position="1337"/>
    </location>
</feature>
<feature type="domain" description="RdRp catalytic" evidence="2">
    <location>
        <begin position="1634"/>
        <end position="1741"/>
    </location>
</feature>
<feature type="region of interest" description="Disordered" evidence="5">
    <location>
        <begin position="607"/>
        <end position="639"/>
    </location>
</feature>
<feature type="compositionally biased region" description="Basic and acidic residues" evidence="5">
    <location>
        <begin position="607"/>
        <end position="635"/>
    </location>
</feature>
<feature type="binding site" evidence="1">
    <location>
        <begin position="1060"/>
        <end position="1067"/>
    </location>
    <ligand>
        <name>ATP</name>
        <dbReference type="ChEBI" id="CHEBI:30616"/>
    </ligand>
</feature>
<accession>P54891</accession>
<name>RDRP_ACLSA</name>
<comment type="function">
    <text evidence="6">Involved in viral RNA replication.</text>
</comment>
<comment type="catalytic activity">
    <reaction evidence="2">
        <text>RNA(n) + a ribonucleoside 5'-triphosphate = RNA(n+1) + diphosphate</text>
        <dbReference type="Rhea" id="RHEA:21248"/>
        <dbReference type="Rhea" id="RHEA-COMP:14527"/>
        <dbReference type="Rhea" id="RHEA-COMP:17342"/>
        <dbReference type="ChEBI" id="CHEBI:33019"/>
        <dbReference type="ChEBI" id="CHEBI:61557"/>
        <dbReference type="ChEBI" id="CHEBI:140395"/>
        <dbReference type="EC" id="2.7.7.48"/>
    </reaction>
</comment>
<proteinExistence type="predicted"/>
<organism>
    <name type="scientific">Apple chlorotic leaf spot virus (isolate apple)</name>
    <name type="common">ACLSV</name>
    <dbReference type="NCBI Taxonomy" id="73472"/>
    <lineage>
        <taxon>Viruses</taxon>
        <taxon>Riboviria</taxon>
        <taxon>Orthornavirae</taxon>
        <taxon>Kitrinoviricota</taxon>
        <taxon>Alsuviricetes</taxon>
        <taxon>Tymovirales</taxon>
        <taxon>Betaflexiviridae</taxon>
        <taxon>Trivirinae</taxon>
        <taxon>Trichovirus</taxon>
        <taxon>Trichovirus mali</taxon>
    </lineage>
</organism>
<sequence length="1885" mass="216507">MAFSYRTPQEELLSRLPQSQQEAISGFQYERFQKEEEKKVENFSFYLPEKTREWFTKSGVYLSPFAYVNHSHPGCKTLENHLLFNVVASYISKYSYVACLSIKSNKMSKMERLGSNSVKTYDILNRLVTAKDKARYGPLARPERSPCPKKTNIFIHDEIHYWSRDQLETFLQVHRPKNLWATLVFPPEILAGYKSSVLPFLYQFEIHGKDLVYMPDGVRSESYTQPLENGFLLSSSSILVRNKATGVEIRYQVSLVYSLGSHHLFHIYPTEDLMKEEVRRFGPYDLFDVGSLFVKPVRVPIQDFPLSVFKKIFIYLSSLKKPDVQSAVAKLRQLSDADISIESVFMVQEFASRVEKNGVGSWSCSFWECMKDWFFDKLPYREVLEKIGLANDFTRRLMKIKPLAFDIHTTDRPLTVRMVIDQIWGERQSSCDDVPNIIFYGRKEWLEHGLLPKVKKGLAKLVPGRETGGSDYPEEIYSDLLSSTSIWRSYDENLRHRKASPIVILKSEKAYSEAPGFSSNCISLCSTPFGEVIERTPFEVERERKKRELSFGCLDFHIRKMKVKDASELSIKLDEQNKEGLRRQKRKEKAKKTRMIPVHLLELGSDQKEKNLGQEASKGKGIEQEERRKSDEAKFDSGPSGVCSIKAENPVDAQHIAEPVPCLKLNDLIGKEKICSSGLIKTVGNDYLTLARQIEDMPLAQLKNRKAAYFCIDYPMVYFHDKISYPTFEATGEIKQIIMRARDKWGANFNSALIQVYNDGCRLPLHSDNEECYDDDEILTINVVGDAKFHTTCHGEIIDLRQGDEILMPGGYQKMNKHAVEVASEGRTSVTLRVHKRDFSFESKLRFIKGKFDCLFVSIAEIIHKKPEEVMMFIPHIVDRCVSNRGCSLDDARAICEKYEIKIECEGDCGLVECGTIGLSVGRMLLRGNHFTVASVRRSSMDSLANSSKELKSNGVLDHVMFNFHKRLRSVEPDLTVEEIKVDSSRAGKLLKSLMDGMTGIVSHNSTHEGWRMIKGINSTSEMRSFMSMIKGKSEETRGDLFDRVQELNFMKVKIYGIFGFAGSGKSHAIQNLIQTEFKGSQGVMVICPRRFLAKDWSEKGVDEKDIKTFESALKSDVKGKRLFILDEISLLPKGFTDLLMLKMHMEGILKKSTIVCIGDPLQAGYFCPKDDNYLSREGEIKRLFKDGVNYKWYSYRINKFIAKKLAIETMNDFIGIDEQNLIYKDMPSAHHFMENKGNHIEVILVPSMIEKELYSNYGNVMTFGESQGLTFNCGVIVLSEEAKLCSDAHIMVAITRFRRGFCFALGSKGSKEDYMRSMKSGLLQRMCSGIGASKEFILGSSSVKLILSEKDVSKGAGVDEMDREARLEGDVWLKSMIYLGKRYHIVEPLGQVIKLTENAIKCHIPVCSSQTLGPELDNIQAREFREFKGKNGWSNQFREEAGPNWKHPYRVNQAMSYEAIYPRHRMDDDLTFLAAIKKRLRFDNVANNYAKFKAAESRGKYLAKVFLRHVPIKCGRDQRLLDQCRQEFEETKLSKSAATIGAHSQRSDSDWPLDKIFLFMKSQLCTKFEKRFTEAKAGQTLACFPHKILVEFSPWCRYTEKVLTANLPDNYYIHQRKNFSELEDFAKRFSNGSMCVESDYTAFDVSQDHTILAFEVELLKHFGWDDKVLQSYIKMKCTLGCRLGGFAIMRFTGEFSTFLFNTLANMVFTFCRYEVPDGTPICFAGDDMCALRNLREIDTHECILSKLSLKAKVNRTKVPMFCGWRLCFDGLIKEPCLIYERLQVAIENGRLMDVIDSYFLEFSFAYKLGERLYSHLEIEQLNYHQVLTRFFIRNKHLLRGDSRHNISELEWLSDEDSDDDKGSQIEDRRRGYSNCWGEKLQNLF</sequence>
<keyword id="KW-0067">ATP-binding</keyword>
<keyword id="KW-0347">Helicase</keyword>
<keyword id="KW-0378">Hydrolase</keyword>
<keyword id="KW-0547">Nucleotide-binding</keyword>
<keyword id="KW-0548">Nucleotidyltransferase</keyword>
<keyword id="KW-0696">RNA-directed RNA polymerase</keyword>
<keyword id="KW-0808">Transferase</keyword>
<keyword id="KW-0693">Viral RNA replication</keyword>